<reference key="1">
    <citation type="journal article" date="2005" name="J. Bacteriol.">
        <title>Complete genome sequence and analysis of the multiresistant nosocomial pathogen Corynebacterium jeikeium K411, a lipid-requiring bacterium of the human skin flora.</title>
        <authorList>
            <person name="Tauch A."/>
            <person name="Kaiser O."/>
            <person name="Hain T."/>
            <person name="Goesmann A."/>
            <person name="Weisshaar B."/>
            <person name="Albersmeier A."/>
            <person name="Bekel T."/>
            <person name="Bischoff N."/>
            <person name="Brune I."/>
            <person name="Chakraborty T."/>
            <person name="Kalinowski J."/>
            <person name="Meyer F."/>
            <person name="Rupp O."/>
            <person name="Schneiker S."/>
            <person name="Viehoever P."/>
            <person name="Puehler A."/>
        </authorList>
    </citation>
    <scope>NUCLEOTIDE SEQUENCE [LARGE SCALE GENOMIC DNA]</scope>
    <source>
        <strain>K411</strain>
    </source>
</reference>
<gene>
    <name evidence="1" type="primary">purA</name>
    <name type="ordered locus">jk0222</name>
</gene>
<accession>Q4JXT3</accession>
<sequence length="429" mass="46383">MAAIIVVGAQWGDEGKGKATDILGGKVDYVVKPNGGNNAGHTVVVGGEKYELKLLPAGVLSENATPIIGNGCVVNLEALFEEIDGLEARGANASRLRVSANAQLVAPYHVAIDRVAERFLGKRAIGTTGRGIGPTYADKVSRVGIRAQDLLDESILRQKIESALDQKNQILVKIYNRRAVDVDEVVEYFLSYADRLKPMLIDATTELNKALDAGKSVLMEGGQATMLDVDHGTYPFVTSSNPTTGGACVGTGIGPTRITASLGIIKAYTTRVGAGPFPTELFDKWGEFLQTTGGEVGVNTGRKRRCGWYDSVIARYASRVNGFTDYFLTKLDVLTGIGEIPICVAYDVDGVRHDEMPMTQTEFHHATPIYETMPAWDEDITDCKTFEELPEKAQDYVKRLEELSGCRISYIGVGPGRDQTIVINDVAEG</sequence>
<keyword id="KW-0963">Cytoplasm</keyword>
<keyword id="KW-0342">GTP-binding</keyword>
<keyword id="KW-0436">Ligase</keyword>
<keyword id="KW-0460">Magnesium</keyword>
<keyword id="KW-0479">Metal-binding</keyword>
<keyword id="KW-0547">Nucleotide-binding</keyword>
<keyword id="KW-0658">Purine biosynthesis</keyword>
<keyword id="KW-1185">Reference proteome</keyword>
<organism>
    <name type="scientific">Corynebacterium jeikeium (strain K411)</name>
    <dbReference type="NCBI Taxonomy" id="306537"/>
    <lineage>
        <taxon>Bacteria</taxon>
        <taxon>Bacillati</taxon>
        <taxon>Actinomycetota</taxon>
        <taxon>Actinomycetes</taxon>
        <taxon>Mycobacteriales</taxon>
        <taxon>Corynebacteriaceae</taxon>
        <taxon>Corynebacterium</taxon>
    </lineage>
</organism>
<comment type="function">
    <text evidence="1">Plays an important role in the de novo pathway of purine nucleotide biosynthesis. Catalyzes the first committed step in the biosynthesis of AMP from IMP.</text>
</comment>
<comment type="catalytic activity">
    <reaction evidence="1">
        <text>IMP + L-aspartate + GTP = N(6)-(1,2-dicarboxyethyl)-AMP + GDP + phosphate + 2 H(+)</text>
        <dbReference type="Rhea" id="RHEA:15753"/>
        <dbReference type="ChEBI" id="CHEBI:15378"/>
        <dbReference type="ChEBI" id="CHEBI:29991"/>
        <dbReference type="ChEBI" id="CHEBI:37565"/>
        <dbReference type="ChEBI" id="CHEBI:43474"/>
        <dbReference type="ChEBI" id="CHEBI:57567"/>
        <dbReference type="ChEBI" id="CHEBI:58053"/>
        <dbReference type="ChEBI" id="CHEBI:58189"/>
        <dbReference type="EC" id="6.3.4.4"/>
    </reaction>
</comment>
<comment type="cofactor">
    <cofactor evidence="1">
        <name>Mg(2+)</name>
        <dbReference type="ChEBI" id="CHEBI:18420"/>
    </cofactor>
    <text evidence="1">Binds 1 Mg(2+) ion per subunit.</text>
</comment>
<comment type="pathway">
    <text evidence="1">Purine metabolism; AMP biosynthesis via de novo pathway; AMP from IMP: step 1/2.</text>
</comment>
<comment type="subunit">
    <text evidence="1">Homodimer.</text>
</comment>
<comment type="subcellular location">
    <subcellularLocation>
        <location evidence="1">Cytoplasm</location>
    </subcellularLocation>
</comment>
<comment type="similarity">
    <text evidence="1">Belongs to the adenylosuccinate synthetase family.</text>
</comment>
<proteinExistence type="inferred from homology"/>
<evidence type="ECO:0000255" key="1">
    <source>
        <dbReference type="HAMAP-Rule" id="MF_00011"/>
    </source>
</evidence>
<dbReference type="EC" id="6.3.4.4" evidence="1"/>
<dbReference type="EMBL" id="CR931997">
    <property type="protein sequence ID" value="CAI36374.1"/>
    <property type="molecule type" value="Genomic_DNA"/>
</dbReference>
<dbReference type="RefSeq" id="WP_011272945.1">
    <property type="nucleotide sequence ID" value="NC_007164.1"/>
</dbReference>
<dbReference type="SMR" id="Q4JXT3"/>
<dbReference type="STRING" id="306537.jk0222"/>
<dbReference type="KEGG" id="cjk:jk0222"/>
<dbReference type="PATRIC" id="fig|306537.10.peg.232"/>
<dbReference type="eggNOG" id="COG0104">
    <property type="taxonomic scope" value="Bacteria"/>
</dbReference>
<dbReference type="HOGENOM" id="CLU_029848_0_0_11"/>
<dbReference type="OrthoDB" id="9807553at2"/>
<dbReference type="UniPathway" id="UPA00075">
    <property type="reaction ID" value="UER00335"/>
</dbReference>
<dbReference type="Proteomes" id="UP000000545">
    <property type="component" value="Chromosome"/>
</dbReference>
<dbReference type="GO" id="GO:0005737">
    <property type="term" value="C:cytoplasm"/>
    <property type="evidence" value="ECO:0007669"/>
    <property type="project" value="UniProtKB-SubCell"/>
</dbReference>
<dbReference type="GO" id="GO:0004019">
    <property type="term" value="F:adenylosuccinate synthase activity"/>
    <property type="evidence" value="ECO:0007669"/>
    <property type="project" value="UniProtKB-UniRule"/>
</dbReference>
<dbReference type="GO" id="GO:0005525">
    <property type="term" value="F:GTP binding"/>
    <property type="evidence" value="ECO:0007669"/>
    <property type="project" value="UniProtKB-UniRule"/>
</dbReference>
<dbReference type="GO" id="GO:0000287">
    <property type="term" value="F:magnesium ion binding"/>
    <property type="evidence" value="ECO:0007669"/>
    <property type="project" value="UniProtKB-UniRule"/>
</dbReference>
<dbReference type="GO" id="GO:0044208">
    <property type="term" value="P:'de novo' AMP biosynthetic process"/>
    <property type="evidence" value="ECO:0007669"/>
    <property type="project" value="UniProtKB-UniRule"/>
</dbReference>
<dbReference type="GO" id="GO:0046040">
    <property type="term" value="P:IMP metabolic process"/>
    <property type="evidence" value="ECO:0007669"/>
    <property type="project" value="TreeGrafter"/>
</dbReference>
<dbReference type="CDD" id="cd03108">
    <property type="entry name" value="AdSS"/>
    <property type="match status" value="1"/>
</dbReference>
<dbReference type="FunFam" id="1.10.300.10:FF:000001">
    <property type="entry name" value="Adenylosuccinate synthetase"/>
    <property type="match status" value="1"/>
</dbReference>
<dbReference type="FunFam" id="3.90.170.10:FF:000001">
    <property type="entry name" value="Adenylosuccinate synthetase"/>
    <property type="match status" value="1"/>
</dbReference>
<dbReference type="Gene3D" id="3.40.440.10">
    <property type="entry name" value="Adenylosuccinate Synthetase, subunit A, domain 1"/>
    <property type="match status" value="1"/>
</dbReference>
<dbReference type="Gene3D" id="1.10.300.10">
    <property type="entry name" value="Adenylosuccinate Synthetase, subunit A, domain 2"/>
    <property type="match status" value="1"/>
</dbReference>
<dbReference type="Gene3D" id="3.90.170.10">
    <property type="entry name" value="Adenylosuccinate Synthetase, subunit A, domain 3"/>
    <property type="match status" value="1"/>
</dbReference>
<dbReference type="HAMAP" id="MF_00011">
    <property type="entry name" value="Adenylosucc_synth"/>
    <property type="match status" value="1"/>
</dbReference>
<dbReference type="InterPro" id="IPR018220">
    <property type="entry name" value="Adenylosuccin_syn_GTP-bd"/>
</dbReference>
<dbReference type="InterPro" id="IPR033128">
    <property type="entry name" value="Adenylosuccin_syn_Lys_AS"/>
</dbReference>
<dbReference type="InterPro" id="IPR042109">
    <property type="entry name" value="Adenylosuccinate_synth_dom1"/>
</dbReference>
<dbReference type="InterPro" id="IPR042110">
    <property type="entry name" value="Adenylosuccinate_synth_dom2"/>
</dbReference>
<dbReference type="InterPro" id="IPR042111">
    <property type="entry name" value="Adenylosuccinate_synth_dom3"/>
</dbReference>
<dbReference type="InterPro" id="IPR001114">
    <property type="entry name" value="Adenylosuccinate_synthetase"/>
</dbReference>
<dbReference type="InterPro" id="IPR027417">
    <property type="entry name" value="P-loop_NTPase"/>
</dbReference>
<dbReference type="NCBIfam" id="NF002223">
    <property type="entry name" value="PRK01117.1"/>
    <property type="match status" value="1"/>
</dbReference>
<dbReference type="NCBIfam" id="TIGR00184">
    <property type="entry name" value="purA"/>
    <property type="match status" value="1"/>
</dbReference>
<dbReference type="PANTHER" id="PTHR11846">
    <property type="entry name" value="ADENYLOSUCCINATE SYNTHETASE"/>
    <property type="match status" value="1"/>
</dbReference>
<dbReference type="PANTHER" id="PTHR11846:SF0">
    <property type="entry name" value="ADENYLOSUCCINATE SYNTHETASE"/>
    <property type="match status" value="1"/>
</dbReference>
<dbReference type="Pfam" id="PF00709">
    <property type="entry name" value="Adenylsucc_synt"/>
    <property type="match status" value="1"/>
</dbReference>
<dbReference type="SMART" id="SM00788">
    <property type="entry name" value="Adenylsucc_synt"/>
    <property type="match status" value="1"/>
</dbReference>
<dbReference type="SUPFAM" id="SSF52540">
    <property type="entry name" value="P-loop containing nucleoside triphosphate hydrolases"/>
    <property type="match status" value="1"/>
</dbReference>
<dbReference type="PROSITE" id="PS01266">
    <property type="entry name" value="ADENYLOSUCCIN_SYN_1"/>
    <property type="match status" value="1"/>
</dbReference>
<dbReference type="PROSITE" id="PS00513">
    <property type="entry name" value="ADENYLOSUCCIN_SYN_2"/>
    <property type="match status" value="1"/>
</dbReference>
<feature type="chain" id="PRO_0000224270" description="Adenylosuccinate synthetase">
    <location>
        <begin position="1"/>
        <end position="429"/>
    </location>
</feature>
<feature type="active site" description="Proton acceptor" evidence="1">
    <location>
        <position position="13"/>
    </location>
</feature>
<feature type="active site" description="Proton donor" evidence="1">
    <location>
        <position position="41"/>
    </location>
</feature>
<feature type="binding site" evidence="1">
    <location>
        <begin position="12"/>
        <end position="18"/>
    </location>
    <ligand>
        <name>GTP</name>
        <dbReference type="ChEBI" id="CHEBI:37565"/>
    </ligand>
</feature>
<feature type="binding site" description="in other chain" evidence="1">
    <location>
        <begin position="13"/>
        <end position="16"/>
    </location>
    <ligand>
        <name>IMP</name>
        <dbReference type="ChEBI" id="CHEBI:58053"/>
        <note>ligand shared between dimeric partners</note>
    </ligand>
</feature>
<feature type="binding site" evidence="1">
    <location>
        <position position="13"/>
    </location>
    <ligand>
        <name>Mg(2+)</name>
        <dbReference type="ChEBI" id="CHEBI:18420"/>
    </ligand>
</feature>
<feature type="binding site" description="in other chain" evidence="1">
    <location>
        <begin position="38"/>
        <end position="41"/>
    </location>
    <ligand>
        <name>IMP</name>
        <dbReference type="ChEBI" id="CHEBI:58053"/>
        <note>ligand shared between dimeric partners</note>
    </ligand>
</feature>
<feature type="binding site" evidence="1">
    <location>
        <begin position="40"/>
        <end position="42"/>
    </location>
    <ligand>
        <name>GTP</name>
        <dbReference type="ChEBI" id="CHEBI:37565"/>
    </ligand>
</feature>
<feature type="binding site" evidence="1">
    <location>
        <position position="40"/>
    </location>
    <ligand>
        <name>Mg(2+)</name>
        <dbReference type="ChEBI" id="CHEBI:18420"/>
    </ligand>
</feature>
<feature type="binding site" description="in other chain" evidence="1">
    <location>
        <position position="128"/>
    </location>
    <ligand>
        <name>IMP</name>
        <dbReference type="ChEBI" id="CHEBI:58053"/>
        <note>ligand shared between dimeric partners</note>
    </ligand>
</feature>
<feature type="binding site" evidence="1">
    <location>
        <position position="142"/>
    </location>
    <ligand>
        <name>IMP</name>
        <dbReference type="ChEBI" id="CHEBI:58053"/>
        <note>ligand shared between dimeric partners</note>
    </ligand>
</feature>
<feature type="binding site" description="in other chain" evidence="1">
    <location>
        <position position="223"/>
    </location>
    <ligand>
        <name>IMP</name>
        <dbReference type="ChEBI" id="CHEBI:58053"/>
        <note>ligand shared between dimeric partners</note>
    </ligand>
</feature>
<feature type="binding site" description="in other chain" evidence="1">
    <location>
        <position position="238"/>
    </location>
    <ligand>
        <name>IMP</name>
        <dbReference type="ChEBI" id="CHEBI:58053"/>
        <note>ligand shared between dimeric partners</note>
    </ligand>
</feature>
<feature type="binding site" evidence="1">
    <location>
        <begin position="298"/>
        <end position="304"/>
    </location>
    <ligand>
        <name>substrate</name>
    </ligand>
</feature>
<feature type="binding site" description="in other chain" evidence="1">
    <location>
        <position position="302"/>
    </location>
    <ligand>
        <name>IMP</name>
        <dbReference type="ChEBI" id="CHEBI:58053"/>
        <note>ligand shared between dimeric partners</note>
    </ligand>
</feature>
<feature type="binding site" evidence="1">
    <location>
        <position position="304"/>
    </location>
    <ligand>
        <name>GTP</name>
        <dbReference type="ChEBI" id="CHEBI:37565"/>
    </ligand>
</feature>
<feature type="binding site" evidence="1">
    <location>
        <begin position="330"/>
        <end position="332"/>
    </location>
    <ligand>
        <name>GTP</name>
        <dbReference type="ChEBI" id="CHEBI:37565"/>
    </ligand>
</feature>
<feature type="binding site" evidence="1">
    <location>
        <begin position="412"/>
        <end position="414"/>
    </location>
    <ligand>
        <name>GTP</name>
        <dbReference type="ChEBI" id="CHEBI:37565"/>
    </ligand>
</feature>
<name>PURA_CORJK</name>
<protein>
    <recommendedName>
        <fullName evidence="1">Adenylosuccinate synthetase</fullName>
        <shortName evidence="1">AMPSase</shortName>
        <shortName evidence="1">AdSS</shortName>
        <ecNumber evidence="1">6.3.4.4</ecNumber>
    </recommendedName>
    <alternativeName>
        <fullName evidence="1">IMP--aspartate ligase</fullName>
    </alternativeName>
</protein>